<keyword id="KW-0025">Alternative splicing</keyword>
<keyword id="KW-0106">Calcium</keyword>
<keyword id="KW-0966">Cell projection</keyword>
<keyword id="KW-1015">Disulfide bond</keyword>
<keyword id="KW-0245">EGF-like domain</keyword>
<keyword id="KW-0272">Extracellular matrix</keyword>
<keyword id="KW-0325">Glycoprotein</keyword>
<keyword id="KW-0373">Hyaluronic acid</keyword>
<keyword id="KW-0393">Immunoglobulin domain</keyword>
<keyword id="KW-0430">Lectin</keyword>
<keyword id="KW-0597">Phosphoprotein</keyword>
<keyword id="KW-0654">Proteoglycan</keyword>
<keyword id="KW-1185">Reference proteome</keyword>
<keyword id="KW-0677">Repeat</keyword>
<keyword id="KW-0964">Secreted</keyword>
<keyword id="KW-0732">Signal</keyword>
<keyword id="KW-0768">Sushi</keyword>
<evidence type="ECO:0000250" key="1"/>
<evidence type="ECO:0000250" key="2">
    <source>
        <dbReference type="UniProtKB" id="P13611"/>
    </source>
</evidence>
<evidence type="ECO:0000250" key="3">
    <source>
        <dbReference type="UniProtKB" id="Q62059"/>
    </source>
</evidence>
<evidence type="ECO:0000255" key="4"/>
<evidence type="ECO:0000255" key="5">
    <source>
        <dbReference type="PROSITE-ProRule" id="PRU00040"/>
    </source>
</evidence>
<evidence type="ECO:0000255" key="6">
    <source>
        <dbReference type="PROSITE-ProRule" id="PRU00076"/>
    </source>
</evidence>
<evidence type="ECO:0000255" key="7">
    <source>
        <dbReference type="PROSITE-ProRule" id="PRU00302"/>
    </source>
</evidence>
<evidence type="ECO:0000255" key="8">
    <source>
        <dbReference type="PROSITE-ProRule" id="PRU00323"/>
    </source>
</evidence>
<evidence type="ECO:0000256" key="9">
    <source>
        <dbReference type="SAM" id="MobiDB-lite"/>
    </source>
</evidence>
<evidence type="ECO:0000303" key="10">
    <source>
    </source>
</evidence>
<evidence type="ECO:0000305" key="11"/>
<proteinExistence type="evidence at transcript level"/>
<organism>
    <name type="scientific">Rattus norvegicus</name>
    <name type="common">Rat</name>
    <dbReference type="NCBI Taxonomy" id="10116"/>
    <lineage>
        <taxon>Eukaryota</taxon>
        <taxon>Metazoa</taxon>
        <taxon>Chordata</taxon>
        <taxon>Craniata</taxon>
        <taxon>Vertebrata</taxon>
        <taxon>Euteleostomi</taxon>
        <taxon>Mammalia</taxon>
        <taxon>Eutheria</taxon>
        <taxon>Euarchontoglires</taxon>
        <taxon>Glires</taxon>
        <taxon>Rodentia</taxon>
        <taxon>Myomorpha</taxon>
        <taxon>Muroidea</taxon>
        <taxon>Muridae</taxon>
        <taxon>Murinae</taxon>
        <taxon>Rattus</taxon>
    </lineage>
</organism>
<feature type="signal peptide" evidence="4">
    <location>
        <begin position="1"/>
        <end position="20"/>
    </location>
</feature>
<feature type="chain" id="PRO_0000017524" description="Versican core protein">
    <location>
        <begin position="21"/>
        <end position="2738"/>
    </location>
</feature>
<feature type="domain" description="Ig-like V-type">
    <location>
        <begin position="21"/>
        <end position="146"/>
    </location>
</feature>
<feature type="domain" description="Link 1" evidence="8">
    <location>
        <begin position="150"/>
        <end position="245"/>
    </location>
</feature>
<feature type="domain" description="Link 2" evidence="8">
    <location>
        <begin position="251"/>
        <end position="347"/>
    </location>
</feature>
<feature type="domain" description="EGF-like 1" evidence="6">
    <location>
        <begin position="2431"/>
        <end position="2467"/>
    </location>
</feature>
<feature type="domain" description="EGF-like 2; calcium-binding" evidence="6">
    <location>
        <begin position="2469"/>
        <end position="2505"/>
    </location>
</feature>
<feature type="domain" description="C-type lectin" evidence="5">
    <location>
        <begin position="2518"/>
        <end position="2632"/>
    </location>
</feature>
<feature type="domain" description="Sushi" evidence="7">
    <location>
        <begin position="2636"/>
        <end position="2696"/>
    </location>
</feature>
<feature type="region of interest" description="GAG-alpha (glucosaminoglycan attachment domain)">
    <location>
        <begin position="349" status="less than"/>
        <end position="695"/>
    </location>
</feature>
<feature type="region of interest" description="Disordered" evidence="9">
    <location>
        <begin position="641"/>
        <end position="679"/>
    </location>
</feature>
<feature type="region of interest" description="GAG-beta">
    <location>
        <begin position="696"/>
        <end position="2431"/>
    </location>
</feature>
<feature type="region of interest" description="Disordered" evidence="9">
    <location>
        <begin position="1064"/>
        <end position="1104"/>
    </location>
</feature>
<feature type="region of interest" description="Disordered" evidence="9">
    <location>
        <begin position="1284"/>
        <end position="1315"/>
    </location>
</feature>
<feature type="region of interest" description="Disordered" evidence="9">
    <location>
        <begin position="1453"/>
        <end position="1478"/>
    </location>
</feature>
<feature type="region of interest" description="Disordered" evidence="9">
    <location>
        <begin position="1671"/>
        <end position="1698"/>
    </location>
</feature>
<feature type="region of interest" description="Disordered" evidence="9">
    <location>
        <begin position="2166"/>
        <end position="2187"/>
    </location>
</feature>
<feature type="region of interest" description="Disordered" evidence="9">
    <location>
        <begin position="2229"/>
        <end position="2287"/>
    </location>
</feature>
<feature type="region of interest" description="Disordered" evidence="9">
    <location>
        <begin position="2714"/>
        <end position="2738"/>
    </location>
</feature>
<feature type="compositionally biased region" description="Polar residues" evidence="9">
    <location>
        <begin position="1064"/>
        <end position="1076"/>
    </location>
</feature>
<feature type="compositionally biased region" description="Basic and acidic residues" evidence="9">
    <location>
        <begin position="1077"/>
        <end position="1090"/>
    </location>
</feature>
<feature type="compositionally biased region" description="Polar residues" evidence="9">
    <location>
        <begin position="1291"/>
        <end position="1303"/>
    </location>
</feature>
<feature type="compositionally biased region" description="Polar residues" evidence="9">
    <location>
        <begin position="1465"/>
        <end position="1478"/>
    </location>
</feature>
<feature type="compositionally biased region" description="Polar residues" evidence="9">
    <location>
        <begin position="2166"/>
        <end position="2178"/>
    </location>
</feature>
<feature type="compositionally biased region" description="Polar residues" evidence="9">
    <location>
        <begin position="2266"/>
        <end position="2282"/>
    </location>
</feature>
<feature type="site" description="Cleavage; by ADAMTS15" evidence="3">
    <location>
        <begin position="788"/>
        <end position="789"/>
    </location>
</feature>
<feature type="modified residue" description="Phosphoserine" evidence="3">
    <location>
        <position position="1963"/>
    </location>
</feature>
<feature type="modified residue" description="Phosphoserine" evidence="3">
    <location>
        <position position="1964"/>
    </location>
</feature>
<feature type="glycosylation site" description="N-linked (GlcNAc...) asparagine" evidence="4">
    <location>
        <position position="57"/>
    </location>
</feature>
<feature type="glycosylation site" description="N-linked (GlcNAc...) asparagine" evidence="4">
    <location>
        <position position="330"/>
    </location>
</feature>
<feature type="glycosylation site" description="N-linked (GlcNAc...) asparagine" evidence="4">
    <location>
        <position position="692"/>
    </location>
</feature>
<feature type="glycosylation site" description="N-linked (GlcNAc...) asparagine" evidence="4">
    <location>
        <position position="758"/>
    </location>
</feature>
<feature type="glycosylation site" description="N-linked (GlcNAc...) asparagine" evidence="4">
    <location>
        <position position="802"/>
    </location>
</feature>
<feature type="glycosylation site" description="N-linked (GlcNAc...) asparagine" evidence="4">
    <location>
        <position position="805"/>
    </location>
</feature>
<feature type="glycosylation site" description="O-linked (Xyl...) (chondroitin sulfate) serine" evidence="2">
    <location>
        <position position="904"/>
    </location>
</feature>
<feature type="glycosylation site" description="O-linked (Xyl...) (chondroitin sulfate) serine" evidence="2">
    <location>
        <position position="986"/>
    </location>
</feature>
<feature type="glycosylation site" description="N-linked (GlcNAc...) asparagine" evidence="4">
    <location>
        <position position="1257"/>
    </location>
</feature>
<feature type="glycosylation site" description="O-linked (Xyl...) (chondroitin sulfate) serine" evidence="2">
    <location>
        <position position="1290"/>
    </location>
</feature>
<feature type="glycosylation site" description="O-linked (Xyl...) (chondroitin sulfate) serine" evidence="2">
    <location>
        <position position="1314"/>
    </location>
</feature>
<feature type="glycosylation site" description="N-linked (GlcNAc...) asparagine" evidence="4">
    <location>
        <position position="1435"/>
    </location>
</feature>
<feature type="glycosylation site" description="O-linked (Xyl...) (chondroitin sulfate) serine" evidence="2">
    <location>
        <position position="1601"/>
    </location>
</feature>
<feature type="glycosylation site" description="O-linked (Xyl...) (chondroitin sulfate) serine" evidence="2">
    <location>
        <position position="1608"/>
    </location>
</feature>
<feature type="glycosylation site" description="N-linked (GlcNAc...) asparagine" evidence="4">
    <location>
        <position position="1633"/>
    </location>
</feature>
<feature type="glycosylation site" description="N-linked (GlcNAc...) asparagine" evidence="4">
    <location>
        <position position="1660"/>
    </location>
</feature>
<feature type="glycosylation site" description="N-linked (GlcNAc...) asparagine" evidence="4">
    <location>
        <position position="1684"/>
    </location>
</feature>
<feature type="glycosylation site" description="N-linked (GlcNAc...) asparagine" evidence="4">
    <location>
        <position position="1738"/>
    </location>
</feature>
<feature type="glycosylation site" description="N-linked (GlcNAc...) asparagine" evidence="4">
    <location>
        <position position="1848"/>
    </location>
</feature>
<feature type="glycosylation site" description="N-linked (GlcNAc...) asparagine" evidence="4">
    <location>
        <position position="2004"/>
    </location>
</feature>
<feature type="glycosylation site" description="O-linked (Xyl...) (chondroitin sulfate) serine" evidence="4">
    <location>
        <position position="2074"/>
    </location>
</feature>
<feature type="glycosylation site" description="O-linked (Xyl...) (chondroitin sulfate) serine" evidence="4">
    <location>
        <position position="2075"/>
    </location>
</feature>
<feature type="glycosylation site" description="O-linked (Xyl...) (chondroitin sulfate) serine" evidence="2">
    <location>
        <position position="2119"/>
    </location>
</feature>
<feature type="glycosylation site" description="N-linked (GlcNAc...) asparagine" evidence="4">
    <location>
        <position position="2409"/>
    </location>
</feature>
<feature type="glycosylation site" description="N-linked (GlcNAc...) asparagine" evidence="4">
    <location>
        <position position="2711"/>
    </location>
</feature>
<feature type="glycosylation site" description="N-linked (GlcNAc...) asparagine" evidence="4">
    <location>
        <position position="2721"/>
    </location>
</feature>
<feature type="disulfide bond" evidence="1">
    <location>
        <begin position="44"/>
        <end position="130"/>
    </location>
</feature>
<feature type="disulfide bond" evidence="1">
    <location>
        <begin position="172"/>
        <end position="243"/>
    </location>
</feature>
<feature type="disulfide bond" evidence="1">
    <location>
        <begin position="196"/>
        <end position="217"/>
    </location>
</feature>
<feature type="disulfide bond" evidence="1">
    <location>
        <begin position="270"/>
        <end position="345"/>
    </location>
</feature>
<feature type="disulfide bond" evidence="1">
    <location>
        <begin position="294"/>
        <end position="315"/>
    </location>
</feature>
<feature type="disulfide bond" evidence="1">
    <location>
        <begin position="2435"/>
        <end position="2446"/>
    </location>
</feature>
<feature type="disulfide bond" evidence="1">
    <location>
        <begin position="2440"/>
        <end position="2455"/>
    </location>
</feature>
<feature type="disulfide bond" evidence="1">
    <location>
        <begin position="2457"/>
        <end position="2466"/>
    </location>
</feature>
<feature type="disulfide bond" evidence="1">
    <location>
        <begin position="2473"/>
        <end position="2484"/>
    </location>
</feature>
<feature type="disulfide bond" evidence="1">
    <location>
        <begin position="2478"/>
        <end position="2493"/>
    </location>
</feature>
<feature type="disulfide bond" evidence="1">
    <location>
        <begin position="2495"/>
        <end position="2504"/>
    </location>
</feature>
<feature type="disulfide bond" evidence="1">
    <location>
        <begin position="2511"/>
        <end position="2522"/>
    </location>
</feature>
<feature type="disulfide bond" evidence="1">
    <location>
        <begin position="2539"/>
        <end position="2631"/>
    </location>
</feature>
<feature type="disulfide bond" evidence="1">
    <location>
        <begin position="2607"/>
        <end position="2623"/>
    </location>
</feature>
<feature type="disulfide bond" evidence="1">
    <location>
        <begin position="2638"/>
        <end position="2681"/>
    </location>
</feature>
<feature type="disulfide bond" evidence="1">
    <location>
        <begin position="2667"/>
        <end position="2694"/>
    </location>
</feature>
<feature type="splice variant" id="VSP_003091" description="In isoform V3." evidence="10">
    <location>
        <begin position="349"/>
        <end position="2431"/>
    </location>
</feature>
<feature type="splice variant" id="VSP_003092" description="In isoform Vint." evidence="10">
    <original>PSAYQRTYSKKYLKNSSSVKDNSINTSKHEHRWSRRWQETRR</original>
    <variation>RKWSFRKNGQPCFNKY</variation>
    <location>
        <begin position="2697"/>
        <end position="2738"/>
    </location>
</feature>
<feature type="sequence conflict" description="In Ref. 4." evidence="11" ref="4">
    <original>AEREC</original>
    <variation>NSARG</variation>
    <location>
        <begin position="2535"/>
        <end position="2539"/>
    </location>
</feature>
<feature type="non-consecutive residues" evidence="11">
    <location>
        <begin position="348"/>
        <end position="349"/>
    </location>
</feature>
<comment type="function">
    <text>May play a role in intercellular signaling and in connecting cells with the extracellular matrix. May take part in the regulation of cell motility, growth and differentiation. Binds hyaluronic acid.</text>
</comment>
<comment type="subunit">
    <text evidence="1">Interacts with FBLN1.</text>
</comment>
<comment type="subcellular location">
    <subcellularLocation>
        <location evidence="2">Secreted</location>
        <location evidence="2">Extracellular space</location>
        <location evidence="2">Extracellular matrix</location>
    </subcellularLocation>
    <subcellularLocation>
        <location evidence="2">Cell projection</location>
        <location evidence="2">Cilium</location>
        <location evidence="2">Photoreceptor outer segment</location>
    </subcellularLocation>
    <subcellularLocation>
        <location evidence="2">Secreted</location>
        <location evidence="2">Extracellular space</location>
        <location evidence="2">Extracellular matrix</location>
        <location evidence="2">Interphotoreceptor matrix</location>
    </subcellularLocation>
    <subcellularLocation>
        <location evidence="2">Secreted</location>
    </subcellularLocation>
</comment>
<comment type="alternative products">
    <event type="alternative splicing"/>
    <isoform>
        <id>Q9ERB4-1</id>
        <name>V0</name>
        <sequence type="displayed"/>
    </isoform>
    <isoform>
        <id>Q9ERB4-2</id>
        <name>V3</name>
        <sequence type="described" ref="VSP_003091"/>
    </isoform>
    <isoform>
        <id>Q9ERB4-3</id>
        <name>Vint</name>
        <sequence type="described" ref="VSP_003092"/>
    </isoform>
    <text>Additional isoforms seem to exist.</text>
</comment>
<comment type="tissue specificity">
    <text>In kidney is expressed in the papillary area, but not in glomeruli.</text>
</comment>
<comment type="developmental stage">
    <text>Disappears after the cartilage development.</text>
</comment>
<comment type="PTM">
    <text evidence="2">Phosphorylated by FAM20C in the extracellular medium.</text>
</comment>
<comment type="PTM">
    <text evidence="3">Proteolytically cleaved by ADAMTS5 and ADAMTS15 in the pericellular matrix surrounding myoblasts, facilitating myoblast contact and fusion which is required for skeletal muscle development and regeneration.</text>
</comment>
<comment type="similarity">
    <text evidence="11">Belongs to the aggrecan/versican proteoglycan family.</text>
</comment>
<dbReference type="EMBL" id="AF062402">
    <property type="protein sequence ID" value="AAC40166.1"/>
    <property type="molecule type" value="mRNA"/>
</dbReference>
<dbReference type="EMBL" id="U75306">
    <property type="protein sequence ID" value="AAB51125.1"/>
    <property type="molecule type" value="mRNA"/>
</dbReference>
<dbReference type="EMBL" id="AF084544">
    <property type="protein sequence ID" value="AAD48544.1"/>
    <property type="molecule type" value="mRNA"/>
</dbReference>
<dbReference type="EMBL" id="AF072892">
    <property type="protein sequence ID" value="AAC26116.1"/>
    <property type="molecule type" value="mRNA"/>
</dbReference>
<dbReference type="EMBL" id="AY007691">
    <property type="protein sequence ID" value="AAG16631.1"/>
    <property type="molecule type" value="mRNA"/>
</dbReference>
<dbReference type="RefSeq" id="NP_001164029.1">
    <property type="nucleotide sequence ID" value="NM_001170558.1"/>
</dbReference>
<dbReference type="RefSeq" id="NP_001164030.1">
    <molecule id="Q9ERB4-2"/>
    <property type="nucleotide sequence ID" value="NM_001170559.1"/>
</dbReference>
<dbReference type="RefSeq" id="NP_001164031.1">
    <property type="nucleotide sequence ID" value="NM_001170560.1"/>
</dbReference>
<dbReference type="SMR" id="Q9ERB4"/>
<dbReference type="BioGRID" id="250300">
    <property type="interactions" value="1"/>
</dbReference>
<dbReference type="FunCoup" id="Q9ERB4">
    <property type="interactions" value="268"/>
</dbReference>
<dbReference type="IntAct" id="Q9ERB4">
    <property type="interactions" value="1"/>
</dbReference>
<dbReference type="MINT" id="Q9ERB4"/>
<dbReference type="STRING" id="10116.ENSRNOP00000045935"/>
<dbReference type="GlyCosmos" id="Q9ERB4">
    <property type="glycosylation" value="17 sites, No reported glycans"/>
</dbReference>
<dbReference type="GlyGen" id="Q9ERB4">
    <property type="glycosylation" value="29 sites"/>
</dbReference>
<dbReference type="ABCD" id="Q9ERB4">
    <property type="antibodies" value="2 sequenced antibodies"/>
</dbReference>
<dbReference type="Ensembl" id="ENSRNOT00000063821.4">
    <molecule id="Q9ERB4-2"/>
    <property type="protein sequence ID" value="ENSRNOP00000062961.3"/>
    <property type="gene ID" value="ENSRNOG00000029212.7"/>
</dbReference>
<dbReference type="GeneID" id="114122"/>
<dbReference type="KEGG" id="rno:114122"/>
<dbReference type="UCSC" id="RGD:619940">
    <molecule id="Q9ERB4-1"/>
    <property type="organism name" value="rat"/>
</dbReference>
<dbReference type="AGR" id="RGD:619940"/>
<dbReference type="CTD" id="1462"/>
<dbReference type="RGD" id="619940">
    <property type="gene designation" value="Vcan"/>
</dbReference>
<dbReference type="eggNOG" id="ENOG502QRBE">
    <property type="taxonomic scope" value="Eukaryota"/>
</dbReference>
<dbReference type="GeneTree" id="ENSGT00940000156102"/>
<dbReference type="InParanoid" id="Q9ERB4"/>
<dbReference type="OrthoDB" id="79906at9989"/>
<dbReference type="PhylomeDB" id="Q9ERB4"/>
<dbReference type="Reactome" id="R-RNO-1971475">
    <property type="pathway name" value="A tetrasaccharide linker sequence is required for GAG synthesis"/>
</dbReference>
<dbReference type="Reactome" id="R-RNO-2022870">
    <property type="pathway name" value="Chondroitin sulfate biosynthesis"/>
</dbReference>
<dbReference type="Reactome" id="R-RNO-2022923">
    <property type="pathway name" value="Dermatan sulfate biosynthesis"/>
</dbReference>
<dbReference type="Reactome" id="R-RNO-2024101">
    <property type="pathway name" value="CS/DS degradation"/>
</dbReference>
<dbReference type="Reactome" id="R-RNO-3000178">
    <property type="pathway name" value="ECM proteoglycans"/>
</dbReference>
<dbReference type="Reactome" id="R-RNO-381426">
    <property type="pathway name" value="Regulation of Insulin-like Growth Factor (IGF) transport and uptake by Insulin-like Growth Factor Binding Proteins (IGFBPs)"/>
</dbReference>
<dbReference type="Reactome" id="R-RNO-8957275">
    <property type="pathway name" value="Post-translational protein phosphorylation"/>
</dbReference>
<dbReference type="Proteomes" id="UP000002494">
    <property type="component" value="Chromosome 2"/>
</dbReference>
<dbReference type="GO" id="GO:0009986">
    <property type="term" value="C:cell surface"/>
    <property type="evidence" value="ECO:0000314"/>
    <property type="project" value="RGD"/>
</dbReference>
<dbReference type="GO" id="GO:0031012">
    <property type="term" value="C:extracellular matrix"/>
    <property type="evidence" value="ECO:0000266"/>
    <property type="project" value="RGD"/>
</dbReference>
<dbReference type="GO" id="GO:0005576">
    <property type="term" value="C:extracellular region"/>
    <property type="evidence" value="ECO:0000250"/>
    <property type="project" value="UniProtKB"/>
</dbReference>
<dbReference type="GO" id="GO:0005615">
    <property type="term" value="C:extracellular space"/>
    <property type="evidence" value="ECO:0000318"/>
    <property type="project" value="GO_Central"/>
</dbReference>
<dbReference type="GO" id="GO:0033165">
    <property type="term" value="C:interphotoreceptor matrix"/>
    <property type="evidence" value="ECO:0007669"/>
    <property type="project" value="UniProtKB-SubCell"/>
</dbReference>
<dbReference type="GO" id="GO:0072534">
    <property type="term" value="C:perineuronal net"/>
    <property type="evidence" value="ECO:0000314"/>
    <property type="project" value="RGD"/>
</dbReference>
<dbReference type="GO" id="GO:0001750">
    <property type="term" value="C:photoreceptor outer segment"/>
    <property type="evidence" value="ECO:0007669"/>
    <property type="project" value="UniProtKB-SubCell"/>
</dbReference>
<dbReference type="GO" id="GO:0045202">
    <property type="term" value="C:synapse"/>
    <property type="evidence" value="ECO:0000314"/>
    <property type="project" value="SynGO"/>
</dbReference>
<dbReference type="GO" id="GO:0005509">
    <property type="term" value="F:calcium ion binding"/>
    <property type="evidence" value="ECO:0007669"/>
    <property type="project" value="InterPro"/>
</dbReference>
<dbReference type="GO" id="GO:0030246">
    <property type="term" value="F:carbohydrate binding"/>
    <property type="evidence" value="ECO:0007669"/>
    <property type="project" value="UniProtKB-KW"/>
</dbReference>
<dbReference type="GO" id="GO:0005540">
    <property type="term" value="F:hyaluronic acid binding"/>
    <property type="evidence" value="ECO:0007669"/>
    <property type="project" value="UniProtKB-KW"/>
</dbReference>
<dbReference type="GO" id="GO:0030169">
    <property type="term" value="F:low-density lipoprotein particle binding"/>
    <property type="evidence" value="ECO:0000304"/>
    <property type="project" value="RGD"/>
</dbReference>
<dbReference type="GO" id="GO:0019903">
    <property type="term" value="F:protein phosphatase binding"/>
    <property type="evidence" value="ECO:0000266"/>
    <property type="project" value="RGD"/>
</dbReference>
<dbReference type="GO" id="GO:0008160">
    <property type="term" value="F:protein tyrosine phosphatase activator activity"/>
    <property type="evidence" value="ECO:0000266"/>
    <property type="project" value="RGD"/>
</dbReference>
<dbReference type="GO" id="GO:0031103">
    <property type="term" value="P:axon regeneration"/>
    <property type="evidence" value="ECO:0000270"/>
    <property type="project" value="RGD"/>
</dbReference>
<dbReference type="GO" id="GO:0007155">
    <property type="term" value="P:cell adhesion"/>
    <property type="evidence" value="ECO:0007669"/>
    <property type="project" value="InterPro"/>
</dbReference>
<dbReference type="GO" id="GO:0007417">
    <property type="term" value="P:central nervous system development"/>
    <property type="evidence" value="ECO:0000318"/>
    <property type="project" value="GO_Central"/>
</dbReference>
<dbReference type="GO" id="GO:0008347">
    <property type="term" value="P:glial cell migration"/>
    <property type="evidence" value="ECO:0000266"/>
    <property type="project" value="RGD"/>
</dbReference>
<dbReference type="GO" id="GO:0007507">
    <property type="term" value="P:heart development"/>
    <property type="evidence" value="ECO:0000266"/>
    <property type="project" value="RGD"/>
</dbReference>
<dbReference type="GO" id="GO:0001501">
    <property type="term" value="P:skeletal system development"/>
    <property type="evidence" value="ECO:0000318"/>
    <property type="project" value="GO_Central"/>
</dbReference>
<dbReference type="GO" id="GO:0001657">
    <property type="term" value="P:ureteric bud development"/>
    <property type="evidence" value="ECO:0000266"/>
    <property type="project" value="RGD"/>
</dbReference>
<dbReference type="CDD" id="cd00033">
    <property type="entry name" value="CCP"/>
    <property type="match status" value="1"/>
</dbReference>
<dbReference type="CDD" id="cd03588">
    <property type="entry name" value="CLECT_CSPGs"/>
    <property type="match status" value="1"/>
</dbReference>
<dbReference type="CDD" id="cd00054">
    <property type="entry name" value="EGF_CA"/>
    <property type="match status" value="2"/>
</dbReference>
<dbReference type="CDD" id="cd05901">
    <property type="entry name" value="Ig_Versican"/>
    <property type="match status" value="1"/>
</dbReference>
<dbReference type="CDD" id="cd03517">
    <property type="entry name" value="Link_domain_CSPGs_modules_1_3"/>
    <property type="match status" value="1"/>
</dbReference>
<dbReference type="CDD" id="cd03520">
    <property type="entry name" value="Link_domain_CSPGs_modules_2_4"/>
    <property type="match status" value="1"/>
</dbReference>
<dbReference type="FunFam" id="3.10.100.10:FF:000011">
    <property type="entry name" value="Aggrecan core protein"/>
    <property type="match status" value="1"/>
</dbReference>
<dbReference type="FunFam" id="3.10.100.10:FF:000002">
    <property type="entry name" value="Hyaluronan proteoglycan link protein 1"/>
    <property type="match status" value="1"/>
</dbReference>
<dbReference type="FunFam" id="2.10.70.10:FF:000003">
    <property type="entry name" value="Versican core protein"/>
    <property type="match status" value="1"/>
</dbReference>
<dbReference type="FunFam" id="3.10.100.10:FF:000003">
    <property type="entry name" value="Versican core protein"/>
    <property type="match status" value="1"/>
</dbReference>
<dbReference type="FunFam" id="2.10.25.10:FF:000527">
    <property type="entry name" value="versican core protein isoform X2"/>
    <property type="match status" value="1"/>
</dbReference>
<dbReference type="FunFam" id="2.60.40.10:FF:000361">
    <property type="entry name" value="versican core protein-like"/>
    <property type="match status" value="1"/>
</dbReference>
<dbReference type="FunFam" id="2.10.25.10:FF:000006">
    <property type="entry name" value="Versican core protein-like isoform 1"/>
    <property type="match status" value="1"/>
</dbReference>
<dbReference type="Gene3D" id="2.10.70.10">
    <property type="entry name" value="Complement Module, domain 1"/>
    <property type="match status" value="1"/>
</dbReference>
<dbReference type="Gene3D" id="2.60.40.10">
    <property type="entry name" value="Immunoglobulins"/>
    <property type="match status" value="1"/>
</dbReference>
<dbReference type="Gene3D" id="2.10.25.10">
    <property type="entry name" value="Laminin"/>
    <property type="match status" value="2"/>
</dbReference>
<dbReference type="Gene3D" id="3.10.100.10">
    <property type="entry name" value="Mannose-Binding Protein A, subunit A"/>
    <property type="match status" value="3"/>
</dbReference>
<dbReference type="InterPro" id="IPR001304">
    <property type="entry name" value="C-type_lectin-like"/>
</dbReference>
<dbReference type="InterPro" id="IPR016186">
    <property type="entry name" value="C-type_lectin-like/link_sf"/>
</dbReference>
<dbReference type="InterPro" id="IPR018378">
    <property type="entry name" value="C-type_lectin_CS"/>
</dbReference>
<dbReference type="InterPro" id="IPR033987">
    <property type="entry name" value="CSPG_CTLD"/>
</dbReference>
<dbReference type="InterPro" id="IPR016187">
    <property type="entry name" value="CTDL_fold"/>
</dbReference>
<dbReference type="InterPro" id="IPR001881">
    <property type="entry name" value="EGF-like_Ca-bd_dom"/>
</dbReference>
<dbReference type="InterPro" id="IPR000742">
    <property type="entry name" value="EGF-like_dom"/>
</dbReference>
<dbReference type="InterPro" id="IPR000152">
    <property type="entry name" value="EGF-type_Asp/Asn_hydroxyl_site"/>
</dbReference>
<dbReference type="InterPro" id="IPR018097">
    <property type="entry name" value="EGF_Ca-bd_CS"/>
</dbReference>
<dbReference type="InterPro" id="IPR050691">
    <property type="entry name" value="Hyaluronan_bind_Proteoglycan"/>
</dbReference>
<dbReference type="InterPro" id="IPR007110">
    <property type="entry name" value="Ig-like_dom"/>
</dbReference>
<dbReference type="InterPro" id="IPR036179">
    <property type="entry name" value="Ig-like_dom_sf"/>
</dbReference>
<dbReference type="InterPro" id="IPR013783">
    <property type="entry name" value="Ig-like_fold"/>
</dbReference>
<dbReference type="InterPro" id="IPR003599">
    <property type="entry name" value="Ig_sub"/>
</dbReference>
<dbReference type="InterPro" id="IPR013106">
    <property type="entry name" value="Ig_V-set"/>
</dbReference>
<dbReference type="InterPro" id="IPR000538">
    <property type="entry name" value="Link_dom"/>
</dbReference>
<dbReference type="InterPro" id="IPR035976">
    <property type="entry name" value="Sushi/SCR/CCP_sf"/>
</dbReference>
<dbReference type="InterPro" id="IPR000436">
    <property type="entry name" value="Sushi_SCR_CCP_dom"/>
</dbReference>
<dbReference type="PANTHER" id="PTHR22804">
    <property type="entry name" value="AGGRECAN/VERSICAN PROTEOGLYCAN"/>
    <property type="match status" value="1"/>
</dbReference>
<dbReference type="PANTHER" id="PTHR22804:SF6">
    <property type="entry name" value="VERSICAN CORE PROTEIN"/>
    <property type="match status" value="1"/>
</dbReference>
<dbReference type="Pfam" id="PF00008">
    <property type="entry name" value="EGF"/>
    <property type="match status" value="2"/>
</dbReference>
<dbReference type="Pfam" id="PF00059">
    <property type="entry name" value="Lectin_C"/>
    <property type="match status" value="1"/>
</dbReference>
<dbReference type="Pfam" id="PF00084">
    <property type="entry name" value="Sushi"/>
    <property type="match status" value="1"/>
</dbReference>
<dbReference type="Pfam" id="PF07686">
    <property type="entry name" value="V-set"/>
    <property type="match status" value="1"/>
</dbReference>
<dbReference type="Pfam" id="PF00193">
    <property type="entry name" value="Xlink"/>
    <property type="match status" value="2"/>
</dbReference>
<dbReference type="PRINTS" id="PR01265">
    <property type="entry name" value="LINKMODULE"/>
</dbReference>
<dbReference type="SMART" id="SM00032">
    <property type="entry name" value="CCP"/>
    <property type="match status" value="1"/>
</dbReference>
<dbReference type="SMART" id="SM00034">
    <property type="entry name" value="CLECT"/>
    <property type="match status" value="1"/>
</dbReference>
<dbReference type="SMART" id="SM00181">
    <property type="entry name" value="EGF"/>
    <property type="match status" value="2"/>
</dbReference>
<dbReference type="SMART" id="SM00179">
    <property type="entry name" value="EGF_CA"/>
    <property type="match status" value="2"/>
</dbReference>
<dbReference type="SMART" id="SM00409">
    <property type="entry name" value="IG"/>
    <property type="match status" value="1"/>
</dbReference>
<dbReference type="SMART" id="SM00406">
    <property type="entry name" value="IGv"/>
    <property type="match status" value="1"/>
</dbReference>
<dbReference type="SMART" id="SM00445">
    <property type="entry name" value="LINK"/>
    <property type="match status" value="2"/>
</dbReference>
<dbReference type="SUPFAM" id="SSF56436">
    <property type="entry name" value="C-type lectin-like"/>
    <property type="match status" value="3"/>
</dbReference>
<dbReference type="SUPFAM" id="SSF57535">
    <property type="entry name" value="Complement control module/SCR domain"/>
    <property type="match status" value="1"/>
</dbReference>
<dbReference type="SUPFAM" id="SSF57196">
    <property type="entry name" value="EGF/Laminin"/>
    <property type="match status" value="1"/>
</dbReference>
<dbReference type="SUPFAM" id="SSF48726">
    <property type="entry name" value="Immunoglobulin"/>
    <property type="match status" value="1"/>
</dbReference>
<dbReference type="PROSITE" id="PS00010">
    <property type="entry name" value="ASX_HYDROXYL"/>
    <property type="match status" value="1"/>
</dbReference>
<dbReference type="PROSITE" id="PS00615">
    <property type="entry name" value="C_TYPE_LECTIN_1"/>
    <property type="match status" value="1"/>
</dbReference>
<dbReference type="PROSITE" id="PS50041">
    <property type="entry name" value="C_TYPE_LECTIN_2"/>
    <property type="match status" value="1"/>
</dbReference>
<dbReference type="PROSITE" id="PS00022">
    <property type="entry name" value="EGF_1"/>
    <property type="match status" value="2"/>
</dbReference>
<dbReference type="PROSITE" id="PS01186">
    <property type="entry name" value="EGF_2"/>
    <property type="match status" value="1"/>
</dbReference>
<dbReference type="PROSITE" id="PS50026">
    <property type="entry name" value="EGF_3"/>
    <property type="match status" value="2"/>
</dbReference>
<dbReference type="PROSITE" id="PS01187">
    <property type="entry name" value="EGF_CA"/>
    <property type="match status" value="1"/>
</dbReference>
<dbReference type="PROSITE" id="PS50835">
    <property type="entry name" value="IG_LIKE"/>
    <property type="match status" value="1"/>
</dbReference>
<dbReference type="PROSITE" id="PS01241">
    <property type="entry name" value="LINK_1"/>
    <property type="match status" value="2"/>
</dbReference>
<dbReference type="PROSITE" id="PS50963">
    <property type="entry name" value="LINK_2"/>
    <property type="match status" value="2"/>
</dbReference>
<dbReference type="PROSITE" id="PS50923">
    <property type="entry name" value="SUSHI"/>
    <property type="match status" value="1"/>
</dbReference>
<gene>
    <name type="primary">Vcan</name>
    <name type="synonym">Cspg2</name>
</gene>
<reference key="1">
    <citation type="journal article" date="1999" name="Arterioscler. Thromb. Vasc. Biol.">
        <title>Versican/PG-M isoforms in vascular smooth muscle cells.</title>
        <authorList>
            <person name="Lemire J.M."/>
            <person name="Braun K.R."/>
            <person name="Maurel P."/>
            <person name="Kaplan E.D."/>
            <person name="Schwartz S.M."/>
            <person name="Wight T.N."/>
        </authorList>
    </citation>
    <scope>NUCLEOTIDE SEQUENCE [MRNA] OF 349-2738 (ISOFORM V0)</scope>
    <scope>NUCLEOTIDE SEQUENCE [MRNA] (ISOFORM V3)</scope>
    <scope>NUCLEOTIDE SEQUENCE [MRNA] OF 2657-2738 (ISOFORM VINT)</scope>
    <source>
        <strain>Wistar Kyoto</strain>
    </source>
</reference>
<reference key="2">
    <citation type="journal article" date="1998" name="Biochem. Biophys. Res. Commun.">
        <title>Differential regulation of expression of hyaluronan-binding proteoglycans in developing brain: aggrecan, versican, neurocan, and brevican.</title>
        <authorList>
            <person name="Milev P."/>
            <person name="Maurel P."/>
            <person name="Chiba A."/>
            <person name="Mevissen M."/>
            <person name="Popp S."/>
            <person name="Yamaguchi Y."/>
            <person name="Margolis R.K."/>
            <person name="Margolis R.U."/>
        </authorList>
    </citation>
    <scope>NUCLEOTIDE SEQUENCE [MRNA] OF 349-2738 (ISOFORM V0)</scope>
    <source>
        <strain>Wistar Kyoto</strain>
    </source>
</reference>
<reference key="3">
    <citation type="journal article" date="1997" name="Nephron">
        <title>Proteoglycan expression in the normal rat kidney.</title>
        <authorList>
            <person name="Pyke C."/>
            <person name="Kristensen P."/>
            <person name="Ostergaard P.B."/>
            <person name="Oturai P.S."/>
            <person name="Romer J."/>
        </authorList>
    </citation>
    <scope>NUCLEOTIDE SEQUENCE [MRNA] OF 2421-2463 (ISOFORM V0)</scope>
    <source>
        <tissue>Kidney</tissue>
    </source>
</reference>
<reference key="4">
    <citation type="submission" date="2000-09" db="EMBL/GenBank/DDBJ databases">
        <title>Molecular cloning and characterization of two developmentally regulated genes in rat lung.</title>
        <authorList>
            <person name="Blomberg L.A."/>
            <person name="Chan W.-Y."/>
            <person name="Clerch L."/>
            <person name="Massaro D."/>
        </authorList>
    </citation>
    <scope>NUCLEOTIDE SEQUENCE [MRNA] OF 2535-2738</scope>
    <source>
        <strain>Sprague-Dawley</strain>
        <tissue>Lung</tissue>
    </source>
</reference>
<name>CSPG2_RAT</name>
<protein>
    <recommendedName>
        <fullName>Versican core protein</fullName>
    </recommendedName>
    <alternativeName>
        <fullName>Chondroitin sulfate proteoglycan core protein 2</fullName>
        <shortName>Chondroitin sulfate proteoglycan 2</shortName>
    </alternativeName>
    <alternativeName>
        <fullName>Glial hyaluronate-binding protein</fullName>
        <shortName>GHAP</shortName>
    </alternativeName>
    <alternativeName>
        <fullName>Large fibroblast proteoglycan</fullName>
    </alternativeName>
    <alternativeName>
        <fullName>PG-M</fullName>
    </alternativeName>
</protein>
<accession>Q9ERB4</accession>
<accession>O08592</accession>
<accession>O88564</accession>
<accession>Q9R1K4</accession>
<sequence>MLINMNGILWMCSTLLLTHALHKAKMEENPPVKGSLSGKVILPCHFSTLPTLPPDYNTSEFLRIKWSKIEVDKNGKDIKETTVLVAQDGNIKIGQDYKGRVSVPTHPDDVGDASLTMVKLRASDAGVYRCDVMYGIEDTQNTMSLAVDGVVFHYRAATSRYTLNFESAQQACLDIGAVIATPEQLFAAYEDGFEQCDAGWLSDQTVRYPIRAPREGCYGDMMGKEGVRTYGFRSPQETYDVYCYVDHLDGDVFHITAPSKFTFEEAEAECANRDARLATVGELHAAWRNGFDQCDYGWLSDASVRHPVTVARAQCGGGLLGVRTLYRFENQTCFPLPDSRFDAYCFKRSPLSIIPKTEWSVSETSVPLEDEVLGKSDQDTLEQTHLEATMSPEALSTIEVTQGETQEEPQTPGIPFPALSSTAVMTKETTAFEEEGEGSTYTLSEDRLMTDSEIVPSLETTPVGTSYPGGAMTQQEVEMDTMVTQMSSIRPTVVLSTEPEVSYEAEGSSPMEFASTLKPFGTQVTQLVEETTEEGKKTPLDYTDLGSGLFEQPRVTELPDFSMTPSDISVFTAIDSLHRTTPLRPPSPFTEEPHIFEKEPSEKTTGDIILPRESVTQHPLTTLMDIIAKKTESDIDHEYHMTSKPPVMQPTRPSVVERKTTSKPQELSTSPPPAGTKFHPDINVYIIEVRENKTGRMSDMVVNGHPIDSESKEEEPCSEETDPLHDLFAEILPELPDSFEIDIYHSEEDEDGEEDCVNATDVTTTPSVQYITGKPHVTTVPKNPEAAEARRGLYESVAPSQNFSNTSATDTHQFIPAETELSTTMQFTKSKEATELLEITWKPETYPETPEHFSSGEPDVFPTLPSHDGKTTKWSEFITESNPNTENPEHKQPKPIPLFPEEFSGEGAIDQASQQTIFSRATEVALGKETDQSPTISTSSIRSGSVSVHALEEDPIALTGISQTDESMSTVESWVEMTPSQTVEFSGSSSAPTIEGSGEVEEYTNKIFNTVTDLPQREPTDTLIPLDMSNIMITDHHIYTPATTAPLDSQLPSTDARPTQFGIQTTTSEWVSSTSFEGRKTEEDKERDTNAAHTGEVQPATERSDRLLLTSELESSNVAASSPLDTWEGFVPETTSTVSEKEMANTTPVFTETSDVANLETQSFEHSSSSQPRVQEELTTLSGKPPLIFMDLGSGDASTDMEFITASSFTLDLESDTKVKKELPSTLSPSVETSSSSEPIGLAPSTVLDIEIVEVMNQTSKKTLISELSGKPTSQAEVRDLYPGLGEDFSGDSSEYPTVSSTTMKEETVGMGGSENERVKDTQTLSSIPPTSDNINPVPDSKGFGSTVASTTAFPWEEFMTSAEGSGEELSSVRSSVSLVLPLGVDILPTTESPYFDQEFEEAAAVTEAGKQSALPIAVSGNTVDLTENRDIEVNSTMSVDLPQTMEPAKLWSKPEVNPEKQEIGSETVTQDKAQGQKSFESLHSSLAPEQTTLESQSLIETEVQTSYYSMLTTMKTYNTNEEVEEEGTSIAHMSTPGPGIKGLESYPTHPEATGKSYSFSASALVTESGPARSVVMDSSTQEEESIKLFQKDMILTHKESNSDLSFSGLGSGEALPPLPTTSVSLTDMGKINSTLYPETSHMESLGTSILGDNHERMKNVSNEVRTLISETGSISQDSTEAPNTTLSDTRTEESTTSPLPFMKLMDTEHSPKQTLRWEEEIQTHRPQTMTGQMTNDNSSVSEAEAAATSAPAFLPETYSVEMTKAFATSPSQTSDLFDANSGEGSGEVDGLDLVYTSRTTQASSQGDSMFASHGFIEKHPEVSRTETGATDGSPTASAMFLHQSEYNESSLYPTSTLPSTVTYESPSEGIADGLQDHIRFEVSTLKPSRRKATESVIIDLDKEDSKDLGLAITESAIVEILPELTSDRNIIIDIDHTKPVYEYIPGIQTDLDSDIPLGSHGSSEESLEVQEKYEATINLSPTEEAFDGSGDALPAGHTQAIYNESVTPSDGKQPEDISFSFATGIPVSSTETELNTFFPTVSTLHIPSKLTTASPEIDKPNIEAISLDDIFESSTLSDGQAIADQSEVISTLGHLEKTQEEYEEKKYGGPSFQPEFFSGVGEVFTDAPAYVSIGRTYSVAQPLTEFPNVVGQSDSTHYTEATSAVSSVTELSPQTPSSPSPVYIDSGVSEFTEVPHKSAQPAPTAASSQKLIEGSFKKVRANIEATIKSLGENDHGTESPSMSPSPALDISEDDSKPKLLEDLETSPTKTETSQDSPNKANDQIPGKTAGILAGIKTTESGPVVTAADDMELGDATQRPHSASAPAAFRVETSMVPQPIPQEPERPTFPSLEINHETHTSLFEESILATSEKQVSQRILDYSNQATVSTLDLNTEHSIPPFSILDNSNETAFLIGISEETVEGTAVYLPGPDLCKTNPCLNGGTCYPTETSYVCTCAPGYSGDQCELDFDECHSNPCRNGATCVDGLNTFRCLCLPSYVGALCEQDTETCDYGWHKFQGQCYKYFAHRRTWDAAERECRLQGAHLTSILSHEEQMFVNRVGHDYQWIGLNDKMFEHDFRWTDGSALQYENWRPNQPDSFFSAGEDCVVIIWHENGQWNDVPCNYHLTYTCKKGTVACGQPPVVENAKTFGKMKPRYEINSLIRYHCKDGFIQRHLPTIRCLGNGRWAMPKITCMNPSAYQRTYSKKYLKNSSSVKDNSINTSKHEHRWSRRWQETRR</sequence>